<reference key="1">
    <citation type="journal article" date="2005" name="J. Gen. Virol.">
        <title>A novel class of herpesvirus with bivalve hosts.</title>
        <authorList>
            <person name="Davison A.J."/>
            <person name="Trus B.L."/>
            <person name="Cheng N."/>
            <person name="Steven A.C."/>
            <person name="Watson M.S."/>
            <person name="Cunningham C."/>
            <person name="Le Deuff R.M."/>
            <person name="Renault T."/>
        </authorList>
    </citation>
    <scope>NUCLEOTIDE SEQUENCE [LARGE SCALE GENOMIC DNA]</scope>
</reference>
<proteinExistence type="predicted"/>
<organism>
    <name type="scientific">Ostreid herpesvirus 1 (isolate France)</name>
    <name type="common">OsHV-1</name>
    <name type="synonym">Pacific oyster herpesvirus</name>
    <dbReference type="NCBI Taxonomy" id="654903"/>
    <lineage>
        <taxon>Viruses</taxon>
        <taxon>Duplodnaviria</taxon>
        <taxon>Heunggongvirae</taxon>
        <taxon>Peploviricota</taxon>
        <taxon>Herviviricetes</taxon>
        <taxon>Herpesvirales</taxon>
        <taxon>Malacoherpesviridae</taxon>
        <taxon>Ostreavirus</taxon>
        <taxon>Ostreavirus ostreidmalaco1</taxon>
        <taxon>Ostreid herpesvirus 1</taxon>
    </lineage>
</organism>
<gene>
    <name type="ORF">ORF110</name>
</gene>
<sequence length="289" mass="32406">MIGPIVVLHLICAVGFSIFMLQYYNILYDKPACNHMGGCEMQDIYKVTENSTEDENGTLTTTTIKPVKTPACPVKECRGDEFCCKLCSEVKGNDYSERPIHMESTLYIHNPAIITIAIVGVVIGVFIIVCIANICRMKSGKRGTTFVRFLIGITLFLLFLTLAGSVAFIVISIISDFDYYKDCHAKLTLNISWGFVCGILAISYSTSILPSFTRIMRAEQLKRDALDIPDHDESTQMLIKADRLKHEPIEKPGLFSTIARYLLTLCLLWWPAITIYFIGVGQGRWLPIV</sequence>
<protein>
    <recommendedName>
        <fullName>Putative transmembrane protein ORF111</fullName>
    </recommendedName>
</protein>
<accession>Q6R7B9</accession>
<comment type="subcellular location">
    <subcellularLocation>
        <location evidence="2">Host membrane</location>
        <topology evidence="2">Multi-pass membrane protein</topology>
    </subcellularLocation>
</comment>
<feature type="chain" id="PRO_0000385125" description="Putative transmembrane protein ORF111">
    <location>
        <begin position="1"/>
        <end position="289"/>
    </location>
</feature>
<feature type="transmembrane region" description="Helical" evidence="1">
    <location>
        <begin position="1"/>
        <end position="21"/>
    </location>
</feature>
<feature type="transmembrane region" description="Helical" evidence="1">
    <location>
        <begin position="112"/>
        <end position="132"/>
    </location>
</feature>
<feature type="transmembrane region" description="Helical" evidence="1">
    <location>
        <begin position="151"/>
        <end position="171"/>
    </location>
</feature>
<feature type="transmembrane region" description="Helical" evidence="1">
    <location>
        <begin position="189"/>
        <end position="209"/>
    </location>
</feature>
<feature type="transmembrane region" description="Helical" evidence="1">
    <location>
        <begin position="261"/>
        <end position="281"/>
    </location>
</feature>
<keyword id="KW-1043">Host membrane</keyword>
<keyword id="KW-0472">Membrane</keyword>
<keyword id="KW-1185">Reference proteome</keyword>
<keyword id="KW-0812">Transmembrane</keyword>
<keyword id="KW-1133">Transmembrane helix</keyword>
<evidence type="ECO:0000255" key="1"/>
<evidence type="ECO:0000305" key="2"/>
<name>Y111_OSHVF</name>
<organismHost>
    <name type="scientific">Magallana gigas</name>
    <name type="common">Pacific oyster</name>
    <name type="synonym">Crassostrea gigas</name>
    <dbReference type="NCBI Taxonomy" id="29159"/>
</organismHost>
<organismHost>
    <name type="scientific">Pecten maximus</name>
    <name type="common">King scallop</name>
    <name type="synonym">Pilgrim's clam</name>
    <dbReference type="NCBI Taxonomy" id="6579"/>
</organismHost>
<dbReference type="EMBL" id="AY509253">
    <property type="protein sequence ID" value="AAS00996.1"/>
    <property type="molecule type" value="Genomic_DNA"/>
</dbReference>
<dbReference type="RefSeq" id="YP_024649.1">
    <property type="nucleotide sequence ID" value="NC_005881.2"/>
</dbReference>
<dbReference type="KEGG" id="vg:2948256"/>
<dbReference type="Proteomes" id="UP000007021">
    <property type="component" value="Segment"/>
</dbReference>
<dbReference type="GO" id="GO:0033644">
    <property type="term" value="C:host cell membrane"/>
    <property type="evidence" value="ECO:0007669"/>
    <property type="project" value="UniProtKB-SubCell"/>
</dbReference>
<dbReference type="GO" id="GO:0016020">
    <property type="term" value="C:membrane"/>
    <property type="evidence" value="ECO:0007669"/>
    <property type="project" value="UniProtKB-KW"/>
</dbReference>